<dbReference type="EC" id="3.6.1.27" evidence="1"/>
<dbReference type="EMBL" id="CP000709">
    <property type="protein sequence ID" value="ABQ62101.1"/>
    <property type="molecule type" value="Genomic_DNA"/>
</dbReference>
<dbReference type="RefSeq" id="WP_002965610.1">
    <property type="nucleotide sequence ID" value="NC_009504.1"/>
</dbReference>
<dbReference type="SMR" id="A5VVU6"/>
<dbReference type="KEGG" id="bov:BOV_A0981"/>
<dbReference type="HOGENOM" id="CLU_060296_2_0_5"/>
<dbReference type="Proteomes" id="UP000006383">
    <property type="component" value="Chromosome II"/>
</dbReference>
<dbReference type="GO" id="GO:0005886">
    <property type="term" value="C:plasma membrane"/>
    <property type="evidence" value="ECO:0007669"/>
    <property type="project" value="UniProtKB-SubCell"/>
</dbReference>
<dbReference type="GO" id="GO:0050380">
    <property type="term" value="F:undecaprenyl-diphosphatase activity"/>
    <property type="evidence" value="ECO:0007669"/>
    <property type="project" value="UniProtKB-UniRule"/>
</dbReference>
<dbReference type="GO" id="GO:0071555">
    <property type="term" value="P:cell wall organization"/>
    <property type="evidence" value="ECO:0007669"/>
    <property type="project" value="UniProtKB-KW"/>
</dbReference>
<dbReference type="GO" id="GO:0009252">
    <property type="term" value="P:peptidoglycan biosynthetic process"/>
    <property type="evidence" value="ECO:0007669"/>
    <property type="project" value="UniProtKB-KW"/>
</dbReference>
<dbReference type="GO" id="GO:0008360">
    <property type="term" value="P:regulation of cell shape"/>
    <property type="evidence" value="ECO:0007669"/>
    <property type="project" value="UniProtKB-KW"/>
</dbReference>
<dbReference type="GO" id="GO:0046677">
    <property type="term" value="P:response to antibiotic"/>
    <property type="evidence" value="ECO:0007669"/>
    <property type="project" value="UniProtKB-UniRule"/>
</dbReference>
<dbReference type="HAMAP" id="MF_01006">
    <property type="entry name" value="Undec_diphosphatase"/>
    <property type="match status" value="1"/>
</dbReference>
<dbReference type="InterPro" id="IPR003824">
    <property type="entry name" value="UppP"/>
</dbReference>
<dbReference type="NCBIfam" id="NF001389">
    <property type="entry name" value="PRK00281.1-2"/>
    <property type="match status" value="1"/>
</dbReference>
<dbReference type="NCBIfam" id="TIGR00753">
    <property type="entry name" value="undec_PP_bacA"/>
    <property type="match status" value="1"/>
</dbReference>
<dbReference type="PANTHER" id="PTHR30622">
    <property type="entry name" value="UNDECAPRENYL-DIPHOSPHATASE"/>
    <property type="match status" value="1"/>
</dbReference>
<dbReference type="PANTHER" id="PTHR30622:SF3">
    <property type="entry name" value="UNDECAPRENYL-DIPHOSPHATASE"/>
    <property type="match status" value="1"/>
</dbReference>
<dbReference type="Pfam" id="PF02673">
    <property type="entry name" value="BacA"/>
    <property type="match status" value="1"/>
</dbReference>
<evidence type="ECO:0000255" key="1">
    <source>
        <dbReference type="HAMAP-Rule" id="MF_01006"/>
    </source>
</evidence>
<reference key="1">
    <citation type="journal article" date="2009" name="PLoS ONE">
        <title>Genome degradation in Brucella ovis corresponds with narrowing of its host range and tissue tropism.</title>
        <authorList>
            <person name="Tsolis R.M."/>
            <person name="Seshadri R."/>
            <person name="Santos R.L."/>
            <person name="Sangari F.J."/>
            <person name="Lobo J.M."/>
            <person name="de Jong M.F."/>
            <person name="Ren Q."/>
            <person name="Myers G."/>
            <person name="Brinkac L.M."/>
            <person name="Nelson W.C."/>
            <person name="Deboy R.T."/>
            <person name="Angiuoli S."/>
            <person name="Khouri H."/>
            <person name="Dimitrov G."/>
            <person name="Robinson J.R."/>
            <person name="Mulligan S."/>
            <person name="Walker R.L."/>
            <person name="Elzer P.E."/>
            <person name="Hassan K.A."/>
            <person name="Paulsen I.T."/>
        </authorList>
    </citation>
    <scope>NUCLEOTIDE SEQUENCE [LARGE SCALE GENOMIC DNA]</scope>
    <source>
        <strain>ATCC 25840 / 63/290 / NCTC 10512</strain>
    </source>
</reference>
<name>UPPP_BRUO2</name>
<keyword id="KW-0046">Antibiotic resistance</keyword>
<keyword id="KW-0997">Cell inner membrane</keyword>
<keyword id="KW-1003">Cell membrane</keyword>
<keyword id="KW-0133">Cell shape</keyword>
<keyword id="KW-0961">Cell wall biogenesis/degradation</keyword>
<keyword id="KW-0378">Hydrolase</keyword>
<keyword id="KW-0472">Membrane</keyword>
<keyword id="KW-0573">Peptidoglycan synthesis</keyword>
<keyword id="KW-0812">Transmembrane</keyword>
<keyword id="KW-1133">Transmembrane helix</keyword>
<sequence>MDFFNLLEAAFLGLIEGLTEFIPVSSTGHLLLIGHFLGFESTGKTFEVLIQLGAILAILSVYSAKLARIATDFPRDARTRRFVLGVLVAFLPAAVIGALAHGFIKGVLFETPMLVCIMLIVGGFILLWVDQLNLRPRYHNVMDYPLPICLAIGFIQCLAMIPGVSRSGSTIVGSLLLGADKRSAAEFSFFLAMPTMAGAFAYDLFKSRNILSFNDGALIVVGFIMAFISGVFVVRHLLDYVSRHGFALFGWWRLIVGSAGMAALIIWG</sequence>
<comment type="function">
    <text evidence="1">Catalyzes the dephosphorylation of undecaprenyl diphosphate (UPP). Confers resistance to bacitracin.</text>
</comment>
<comment type="catalytic activity">
    <reaction evidence="1">
        <text>di-trans,octa-cis-undecaprenyl diphosphate + H2O = di-trans,octa-cis-undecaprenyl phosphate + phosphate + H(+)</text>
        <dbReference type="Rhea" id="RHEA:28094"/>
        <dbReference type="ChEBI" id="CHEBI:15377"/>
        <dbReference type="ChEBI" id="CHEBI:15378"/>
        <dbReference type="ChEBI" id="CHEBI:43474"/>
        <dbReference type="ChEBI" id="CHEBI:58405"/>
        <dbReference type="ChEBI" id="CHEBI:60392"/>
        <dbReference type="EC" id="3.6.1.27"/>
    </reaction>
</comment>
<comment type="subcellular location">
    <subcellularLocation>
        <location evidence="1">Cell inner membrane</location>
        <topology evidence="1">Multi-pass membrane protein</topology>
    </subcellularLocation>
</comment>
<comment type="miscellaneous">
    <text>Bacitracin is thought to be involved in the inhibition of peptidoglycan synthesis by sequestering undecaprenyl diphosphate, thereby reducing the pool of lipid carrier available.</text>
</comment>
<comment type="similarity">
    <text evidence="1">Belongs to the UppP family.</text>
</comment>
<feature type="chain" id="PRO_0000303022" description="Undecaprenyl-diphosphatase">
    <location>
        <begin position="1"/>
        <end position="268"/>
    </location>
</feature>
<feature type="transmembrane region" description="Helical" evidence="1">
    <location>
        <begin position="3"/>
        <end position="23"/>
    </location>
</feature>
<feature type="transmembrane region" description="Helical" evidence="1">
    <location>
        <begin position="46"/>
        <end position="66"/>
    </location>
</feature>
<feature type="transmembrane region" description="Helical" evidence="1">
    <location>
        <begin position="84"/>
        <end position="104"/>
    </location>
</feature>
<feature type="transmembrane region" description="Helical" evidence="1">
    <location>
        <begin position="107"/>
        <end position="127"/>
    </location>
</feature>
<feature type="transmembrane region" description="Helical" evidence="1">
    <location>
        <begin position="144"/>
        <end position="164"/>
    </location>
</feature>
<feature type="transmembrane region" description="Helical" evidence="1">
    <location>
        <begin position="185"/>
        <end position="205"/>
    </location>
</feature>
<feature type="transmembrane region" description="Helical" evidence="1">
    <location>
        <begin position="213"/>
        <end position="233"/>
    </location>
</feature>
<feature type="transmembrane region" description="Helical" evidence="1">
    <location>
        <begin position="246"/>
        <end position="266"/>
    </location>
</feature>
<protein>
    <recommendedName>
        <fullName evidence="1">Undecaprenyl-diphosphatase</fullName>
        <ecNumber evidence="1">3.6.1.27</ecNumber>
    </recommendedName>
    <alternativeName>
        <fullName evidence="1">Bacitracin resistance protein</fullName>
    </alternativeName>
    <alternativeName>
        <fullName evidence="1">Undecaprenyl pyrophosphate phosphatase</fullName>
    </alternativeName>
</protein>
<accession>A5VVU6</accession>
<proteinExistence type="inferred from homology"/>
<organism>
    <name type="scientific">Brucella ovis (strain ATCC 25840 / 63/290 / NCTC 10512)</name>
    <dbReference type="NCBI Taxonomy" id="444178"/>
    <lineage>
        <taxon>Bacteria</taxon>
        <taxon>Pseudomonadati</taxon>
        <taxon>Pseudomonadota</taxon>
        <taxon>Alphaproteobacteria</taxon>
        <taxon>Hyphomicrobiales</taxon>
        <taxon>Brucellaceae</taxon>
        <taxon>Brucella/Ochrobactrum group</taxon>
        <taxon>Brucella</taxon>
    </lineage>
</organism>
<gene>
    <name evidence="1" type="primary">uppP</name>
    <name type="ordered locus">BOV_A0981</name>
</gene>